<reference key="1">
    <citation type="journal article" date="2001" name="Nature">
        <title>Massive gene decay in the leprosy bacillus.</title>
        <authorList>
            <person name="Cole S.T."/>
            <person name="Eiglmeier K."/>
            <person name="Parkhill J."/>
            <person name="James K.D."/>
            <person name="Thomson N.R."/>
            <person name="Wheeler P.R."/>
            <person name="Honore N."/>
            <person name="Garnier T."/>
            <person name="Churcher C.M."/>
            <person name="Harris D.E."/>
            <person name="Mungall K.L."/>
            <person name="Basham D."/>
            <person name="Brown D."/>
            <person name="Chillingworth T."/>
            <person name="Connor R."/>
            <person name="Davies R.M."/>
            <person name="Devlin K."/>
            <person name="Duthoy S."/>
            <person name="Feltwell T."/>
            <person name="Fraser A."/>
            <person name="Hamlin N."/>
            <person name="Holroyd S."/>
            <person name="Hornsby T."/>
            <person name="Jagels K."/>
            <person name="Lacroix C."/>
            <person name="Maclean J."/>
            <person name="Moule S."/>
            <person name="Murphy L.D."/>
            <person name="Oliver K."/>
            <person name="Quail M.A."/>
            <person name="Rajandream M.A."/>
            <person name="Rutherford K.M."/>
            <person name="Rutter S."/>
            <person name="Seeger K."/>
            <person name="Simon S."/>
            <person name="Simmonds M."/>
            <person name="Skelton J."/>
            <person name="Squares R."/>
            <person name="Squares S."/>
            <person name="Stevens K."/>
            <person name="Taylor K."/>
            <person name="Whitehead S."/>
            <person name="Woodward J.R."/>
            <person name="Barrell B.G."/>
        </authorList>
    </citation>
    <scope>NUCLEOTIDE SEQUENCE [LARGE SCALE GENOMIC DNA]</scope>
    <source>
        <strain>TN</strain>
    </source>
</reference>
<feature type="chain" id="PRO_0000310703" description="Succinate-semialdehyde dehydrogenase [NADP(+)]">
    <location>
        <begin position="1"/>
        <end position="457"/>
    </location>
</feature>
<feature type="active site" description="Proton acceptor" evidence="2">
    <location>
        <position position="231"/>
    </location>
</feature>
<feature type="active site" description="Nucleophile" evidence="2">
    <location>
        <position position="265"/>
    </location>
</feature>
<feature type="binding site" evidence="1">
    <location>
        <begin position="133"/>
        <end position="134"/>
    </location>
    <ligand>
        <name>NADP(+)</name>
        <dbReference type="ChEBI" id="CHEBI:58349"/>
    </ligand>
</feature>
<feature type="binding site" evidence="1">
    <location>
        <begin position="157"/>
        <end position="160"/>
    </location>
    <ligand>
        <name>NADP(+)</name>
        <dbReference type="ChEBI" id="CHEBI:58349"/>
    </ligand>
</feature>
<feature type="binding site" evidence="1">
    <location>
        <begin position="209"/>
        <end position="210"/>
    </location>
    <ligand>
        <name>NADP(+)</name>
        <dbReference type="ChEBI" id="CHEBI:58349"/>
    </ligand>
</feature>
<feature type="binding site" evidence="1">
    <location>
        <position position="232"/>
    </location>
    <ligand>
        <name>NADP(+)</name>
        <dbReference type="ChEBI" id="CHEBI:58349"/>
    </ligand>
</feature>
<feature type="binding site" evidence="1">
    <location>
        <position position="362"/>
    </location>
    <ligand>
        <name>NADP(+)</name>
        <dbReference type="ChEBI" id="CHEBI:58349"/>
    </ligand>
</feature>
<evidence type="ECO:0000250" key="1"/>
<evidence type="ECO:0000255" key="2">
    <source>
        <dbReference type="PROSITE-ProRule" id="PRU10008"/>
    </source>
</evidence>
<evidence type="ECO:0000305" key="3"/>
<proteinExistence type="inferred from homology"/>
<organism>
    <name type="scientific">Mycobacterium leprae (strain TN)</name>
    <dbReference type="NCBI Taxonomy" id="272631"/>
    <lineage>
        <taxon>Bacteria</taxon>
        <taxon>Bacillati</taxon>
        <taxon>Actinomycetota</taxon>
        <taxon>Actinomycetes</taxon>
        <taxon>Mycobacteriales</taxon>
        <taxon>Mycobacteriaceae</taxon>
        <taxon>Mycobacterium</taxon>
    </lineage>
</organism>
<name>GABD1_MYCLE</name>
<comment type="function">
    <text evidence="1">Catalyzes the NADP(+)-dependent oxidation of succinate semialdehyde to succinate. It is believed to be the main source of succinate semialdehyde dehydrogenase activity in Mycobacterium (By similarity).</text>
</comment>
<comment type="catalytic activity">
    <reaction>
        <text>succinate semialdehyde + NADP(+) + H2O = succinate + NADPH + 2 H(+)</text>
        <dbReference type="Rhea" id="RHEA:13213"/>
        <dbReference type="ChEBI" id="CHEBI:15377"/>
        <dbReference type="ChEBI" id="CHEBI:15378"/>
        <dbReference type="ChEBI" id="CHEBI:30031"/>
        <dbReference type="ChEBI" id="CHEBI:57706"/>
        <dbReference type="ChEBI" id="CHEBI:57783"/>
        <dbReference type="ChEBI" id="CHEBI:58349"/>
        <dbReference type="EC" id="1.2.1.79"/>
    </reaction>
</comment>
<comment type="similarity">
    <text evidence="3">Belongs to the aldehyde dehydrogenase family.</text>
</comment>
<gene>
    <name type="primary">gabD1</name>
    <name type="ordered locus">ML2573</name>
    <name type="ORF">MLCB1883.11c</name>
</gene>
<sequence>MSIATINPATGETVKTFTPTTQDEVEDAIARAYARFDNYRHTTFTQRAKWANATADLLEAEANQSAALMTLEMGKTLQSAKDEAMKCAKGFRYYAEKAETLLADEPAEAAAVGASKALARYQPLGVVLAVMPWNFPLWQTVRFAAPALMAGNVGLLKHASNVPQCALYLADVIARGGFPEDCFQTLLISANGVEAILRDPRVAAATLTGSEPAGQAVGAIAGNEIKPTVLELGGSDPFIVMPSADLDAAVATAVTGRVQNNGQSCIAAKRFIAHADIYDEFVEKFVARMETLRVGDPTDPDTDVGPLATESGRAQVEQQVDAAAAAGAVIRCGGKRPDRPGWFYPPTVITDITKDMALYTDEVFGPVASVYCATNIDDAIEIANATPFGLGSNAWTQNESEQRHFIDNIVAGQVFINGMTVSYPELPFGGIKRSGYGRELSTHGIREFCNIKTVWIA</sequence>
<dbReference type="EC" id="1.2.1.79"/>
<dbReference type="EMBL" id="AL022486">
    <property type="protein sequence ID" value="CAA18560.1"/>
    <property type="molecule type" value="Genomic_DNA"/>
</dbReference>
<dbReference type="EMBL" id="AL583926">
    <property type="protein sequence ID" value="CAC32105.1"/>
    <property type="molecule type" value="Genomic_DNA"/>
</dbReference>
<dbReference type="PIR" id="T44871">
    <property type="entry name" value="T44871"/>
</dbReference>
<dbReference type="RefSeq" id="NP_302648.1">
    <property type="nucleotide sequence ID" value="NC_002677.1"/>
</dbReference>
<dbReference type="RefSeq" id="WP_010908967.1">
    <property type="nucleotide sequence ID" value="NC_002677.1"/>
</dbReference>
<dbReference type="SMR" id="O69497"/>
<dbReference type="STRING" id="272631.gene:17576439"/>
<dbReference type="KEGG" id="mle:ML2573"/>
<dbReference type="PATRIC" id="fig|272631.5.peg.4945"/>
<dbReference type="Leproma" id="ML2573"/>
<dbReference type="eggNOG" id="COG1012">
    <property type="taxonomic scope" value="Bacteria"/>
</dbReference>
<dbReference type="HOGENOM" id="CLU_005391_5_3_11"/>
<dbReference type="OrthoDB" id="6882680at2"/>
<dbReference type="Proteomes" id="UP000000806">
    <property type="component" value="Chromosome"/>
</dbReference>
<dbReference type="GO" id="GO:0004030">
    <property type="term" value="F:aldehyde dehydrogenase [NAD(P)+] activity"/>
    <property type="evidence" value="ECO:0007669"/>
    <property type="project" value="InterPro"/>
</dbReference>
<dbReference type="GO" id="GO:0004777">
    <property type="term" value="F:succinate-semialdehyde dehydrogenase (NAD+) activity"/>
    <property type="evidence" value="ECO:0007669"/>
    <property type="project" value="TreeGrafter"/>
</dbReference>
<dbReference type="GO" id="GO:0036243">
    <property type="term" value="F:succinate-semialdehyde dehydrogenase (NADP+) activity"/>
    <property type="evidence" value="ECO:0007669"/>
    <property type="project" value="UniProtKB-EC"/>
</dbReference>
<dbReference type="GO" id="GO:0006099">
    <property type="term" value="P:tricarboxylic acid cycle"/>
    <property type="evidence" value="ECO:0007669"/>
    <property type="project" value="UniProtKB-KW"/>
</dbReference>
<dbReference type="CDD" id="cd07100">
    <property type="entry name" value="ALDH_SSADH1_GabD1"/>
    <property type="match status" value="1"/>
</dbReference>
<dbReference type="FunFam" id="3.40.309.10:FF:000010">
    <property type="entry name" value="Gamma-aminobutyraldehyde dehydrogenase"/>
    <property type="match status" value="1"/>
</dbReference>
<dbReference type="FunFam" id="3.40.605.10:FF:000012">
    <property type="entry name" value="NAD-dependent succinate-semialdehyde dehydrogenase"/>
    <property type="match status" value="1"/>
</dbReference>
<dbReference type="Gene3D" id="3.40.605.10">
    <property type="entry name" value="Aldehyde Dehydrogenase, Chain A, domain 1"/>
    <property type="match status" value="1"/>
</dbReference>
<dbReference type="Gene3D" id="3.40.309.10">
    <property type="entry name" value="Aldehyde Dehydrogenase, Chain A, domain 2"/>
    <property type="match status" value="1"/>
</dbReference>
<dbReference type="InterPro" id="IPR016161">
    <property type="entry name" value="Ald_DH/histidinol_DH"/>
</dbReference>
<dbReference type="InterPro" id="IPR016163">
    <property type="entry name" value="Ald_DH_C"/>
</dbReference>
<dbReference type="InterPro" id="IPR016160">
    <property type="entry name" value="Ald_DH_CS_CYS"/>
</dbReference>
<dbReference type="InterPro" id="IPR016162">
    <property type="entry name" value="Ald_DH_N"/>
</dbReference>
<dbReference type="InterPro" id="IPR015590">
    <property type="entry name" value="Aldehyde_DH_dom"/>
</dbReference>
<dbReference type="InterPro" id="IPR044148">
    <property type="entry name" value="ALDH_GabD1-like"/>
</dbReference>
<dbReference type="InterPro" id="IPR047110">
    <property type="entry name" value="GABD/Sad-like"/>
</dbReference>
<dbReference type="NCBIfam" id="NF006915">
    <property type="entry name" value="PRK09406.1"/>
    <property type="match status" value="1"/>
</dbReference>
<dbReference type="PANTHER" id="PTHR43217">
    <property type="entry name" value="SUCCINATE SEMIALDEHYDE DEHYDROGENASE [NAD(P)+] SAD"/>
    <property type="match status" value="1"/>
</dbReference>
<dbReference type="PANTHER" id="PTHR43217:SF1">
    <property type="entry name" value="SUCCINATE SEMIALDEHYDE DEHYDROGENASE [NAD(P)+] SAD"/>
    <property type="match status" value="1"/>
</dbReference>
<dbReference type="Pfam" id="PF00171">
    <property type="entry name" value="Aldedh"/>
    <property type="match status" value="1"/>
</dbReference>
<dbReference type="SUPFAM" id="SSF53720">
    <property type="entry name" value="ALDH-like"/>
    <property type="match status" value="1"/>
</dbReference>
<dbReference type="PROSITE" id="PS00070">
    <property type="entry name" value="ALDEHYDE_DEHYDR_CYS"/>
    <property type="match status" value="1"/>
</dbReference>
<protein>
    <recommendedName>
        <fullName>Succinate-semialdehyde dehydrogenase [NADP(+)]</fullName>
        <shortName>SSADH</shortName>
        <shortName>SSDH</shortName>
        <ecNumber>1.2.1.79</ecNumber>
    </recommendedName>
</protein>
<accession>O69497</accession>
<keyword id="KW-0521">NADP</keyword>
<keyword id="KW-0560">Oxidoreductase</keyword>
<keyword id="KW-1185">Reference proteome</keyword>
<keyword id="KW-0816">Tricarboxylic acid cycle</keyword>